<proteinExistence type="predicted"/>
<feature type="chain" id="PRO_0000384553" description="Uncharacterized protein ORF115">
    <location>
        <begin position="1"/>
        <end position="115"/>
    </location>
</feature>
<name>Y115_AFV1Y</name>
<gene>
    <name type="ORF">ORF115</name>
</gene>
<keyword id="KW-1185">Reference proteome</keyword>
<dbReference type="EMBL" id="AJ567472">
    <property type="protein sequence ID" value="CAD98942.1"/>
    <property type="molecule type" value="Genomic_DNA"/>
</dbReference>
<dbReference type="RefSeq" id="YP_003738.1">
    <property type="nucleotide sequence ID" value="NC_005830.1"/>
</dbReference>
<dbReference type="SMR" id="Q70LD8"/>
<dbReference type="KEGG" id="vg:2769157"/>
<dbReference type="Proteomes" id="UP000000514">
    <property type="component" value="Genome"/>
</dbReference>
<protein>
    <recommendedName>
        <fullName>Uncharacterized protein ORF115</fullName>
    </recommendedName>
</protein>
<sequence length="115" mass="12932">MGKEKVEEKKENKSGVKEKIQNWIADAKKRGTWQTLLLKQIGNTRLNVAVTPDGSALLKIFINRPQNGIIFSLNELEDIKKAIEIAESIKSELESIPEFKNAKVSLKTQKGVLDE</sequence>
<organism>
    <name type="scientific">Acidianus filamentous virus 1 (isolate United States/Yellowstone)</name>
    <name type="common">AFV-1</name>
    <dbReference type="NCBI Taxonomy" id="654909"/>
    <lineage>
        <taxon>Viruses</taxon>
        <taxon>Adnaviria</taxon>
        <taxon>Zilligvirae</taxon>
        <taxon>Taleaviricota</taxon>
        <taxon>Tokiviricetes</taxon>
        <taxon>Ligamenvirales</taxon>
        <taxon>Ungulaviridae</taxon>
        <taxon>Captovirus</taxon>
        <taxon>Acidianus filamentous virus 1</taxon>
    </lineage>
</organism>
<organismHost>
    <name type="scientific">Acidianus hospitalis</name>
    <dbReference type="NCBI Taxonomy" id="563177"/>
</organismHost>
<organismHost>
    <name type="scientific">Acidianus infernus</name>
    <dbReference type="NCBI Taxonomy" id="12915"/>
</organismHost>
<reference key="1">
    <citation type="journal article" date="2003" name="Virology">
        <title>AFV1, a novel virus infecting hyperthermophilic archaea of the genus acidianus.</title>
        <authorList>
            <person name="Bettstetter M."/>
            <person name="Peng X."/>
            <person name="Garrett R.A."/>
            <person name="Prangishvili D."/>
        </authorList>
    </citation>
    <scope>NUCLEOTIDE SEQUENCE [GENOMIC DNA]</scope>
</reference>
<accession>Q70LD8</accession>